<sequence>MKRYIVGISGASGAILAVTLVSELARLGHHVDVIISPAAQKTLYYELETKSFLATIPSNLHKNILIHRITSIESSLSSGSTLVDATIIVPCSVATIAAISCGLSDNLLRRVADVALKEKRPLILVPRETPLSAIHLENLLKLAQNGAVILPPMPTWYFRPETANDIANDIVGKILAILQLDSPLIKRWENPH</sequence>
<keyword id="KW-0285">Flavoprotein</keyword>
<keyword id="KW-0288">FMN</keyword>
<keyword id="KW-0637">Prenyltransferase</keyword>
<keyword id="KW-0808">Transferase</keyword>
<evidence type="ECO:0000255" key="1">
    <source>
        <dbReference type="HAMAP-Rule" id="MF_01984"/>
    </source>
</evidence>
<comment type="function">
    <text evidence="1">Flavin prenyltransferase that catalyzes the synthesis of the prenylated FMN cofactor (prenyl-FMN) for 4-hydroxy-3-polyprenylbenzoic acid decarboxylase UbiD. The prenyltransferase is metal-independent and links a dimethylallyl moiety from dimethylallyl monophosphate (DMAP) to the flavin N5 and C6 atoms of FMN.</text>
</comment>
<comment type="catalytic activity">
    <reaction evidence="1">
        <text>dimethylallyl phosphate + FMNH2 = prenylated FMNH2 + phosphate</text>
        <dbReference type="Rhea" id="RHEA:37743"/>
        <dbReference type="ChEBI" id="CHEBI:43474"/>
        <dbReference type="ChEBI" id="CHEBI:57618"/>
        <dbReference type="ChEBI" id="CHEBI:87467"/>
        <dbReference type="ChEBI" id="CHEBI:88052"/>
        <dbReference type="EC" id="2.5.1.129"/>
    </reaction>
</comment>
<comment type="similarity">
    <text evidence="1">Belongs to the UbiX/PAD1 family.</text>
</comment>
<proteinExistence type="inferred from homology"/>
<protein>
    <recommendedName>
        <fullName evidence="1">Flavin prenyltransferase UbiX</fullName>
        <ecNumber evidence="1">2.5.1.129</ecNumber>
    </recommendedName>
</protein>
<gene>
    <name evidence="1" type="primary">ubiX</name>
    <name type="ordered locus">TC_0493</name>
</gene>
<dbReference type="EC" id="2.5.1.129" evidence="1"/>
<dbReference type="EMBL" id="AE002160">
    <property type="protein sequence ID" value="AAF73564.1"/>
    <property type="molecule type" value="Genomic_DNA"/>
</dbReference>
<dbReference type="RefSeq" id="WP_010230602.1">
    <property type="nucleotide sequence ID" value="NZ_CP063055.1"/>
</dbReference>
<dbReference type="SMR" id="Q9PKH2"/>
<dbReference type="GeneID" id="1245851"/>
<dbReference type="KEGG" id="cmu:TC_0493"/>
<dbReference type="eggNOG" id="COG0163">
    <property type="taxonomic scope" value="Bacteria"/>
</dbReference>
<dbReference type="HOGENOM" id="CLU_074522_0_1_0"/>
<dbReference type="OrthoDB" id="9781577at2"/>
<dbReference type="Proteomes" id="UP000000800">
    <property type="component" value="Chromosome"/>
</dbReference>
<dbReference type="GO" id="GO:0016831">
    <property type="term" value="F:carboxy-lyase activity"/>
    <property type="evidence" value="ECO:0007669"/>
    <property type="project" value="TreeGrafter"/>
</dbReference>
<dbReference type="GO" id="GO:0106141">
    <property type="term" value="F:flavin prenyltransferase activity"/>
    <property type="evidence" value="ECO:0007669"/>
    <property type="project" value="UniProtKB-EC"/>
</dbReference>
<dbReference type="Gene3D" id="3.40.50.1950">
    <property type="entry name" value="Flavin prenyltransferase-like"/>
    <property type="match status" value="1"/>
</dbReference>
<dbReference type="HAMAP" id="MF_01984">
    <property type="entry name" value="ubiX_pad"/>
    <property type="match status" value="1"/>
</dbReference>
<dbReference type="InterPro" id="IPR036551">
    <property type="entry name" value="Flavin_trans-like"/>
</dbReference>
<dbReference type="InterPro" id="IPR003382">
    <property type="entry name" value="Flavoprotein"/>
</dbReference>
<dbReference type="InterPro" id="IPR004507">
    <property type="entry name" value="UbiX-like"/>
</dbReference>
<dbReference type="NCBIfam" id="NF004685">
    <property type="entry name" value="PRK06029.1"/>
    <property type="match status" value="1"/>
</dbReference>
<dbReference type="NCBIfam" id="TIGR00421">
    <property type="entry name" value="ubiX_pad"/>
    <property type="match status" value="1"/>
</dbReference>
<dbReference type="PANTHER" id="PTHR43374">
    <property type="entry name" value="FLAVIN PRENYLTRANSFERASE"/>
    <property type="match status" value="1"/>
</dbReference>
<dbReference type="PANTHER" id="PTHR43374:SF1">
    <property type="entry name" value="FLAVIN PRENYLTRANSFERASE PAD1, MITOCHONDRIAL"/>
    <property type="match status" value="1"/>
</dbReference>
<dbReference type="Pfam" id="PF02441">
    <property type="entry name" value="Flavoprotein"/>
    <property type="match status" value="1"/>
</dbReference>
<dbReference type="SUPFAM" id="SSF52507">
    <property type="entry name" value="Homo-oligomeric flavin-containing Cys decarboxylases, HFCD"/>
    <property type="match status" value="1"/>
</dbReference>
<name>UBIX_CHLMU</name>
<reference key="1">
    <citation type="journal article" date="2000" name="Nucleic Acids Res.">
        <title>Genome sequences of Chlamydia trachomatis MoPn and Chlamydia pneumoniae AR39.</title>
        <authorList>
            <person name="Read T.D."/>
            <person name="Brunham R.C."/>
            <person name="Shen C."/>
            <person name="Gill S.R."/>
            <person name="Heidelberg J.F."/>
            <person name="White O."/>
            <person name="Hickey E.K."/>
            <person name="Peterson J.D."/>
            <person name="Utterback T.R."/>
            <person name="Berry K.J."/>
            <person name="Bass S."/>
            <person name="Linher K.D."/>
            <person name="Weidman J.F."/>
            <person name="Khouri H.M."/>
            <person name="Craven B."/>
            <person name="Bowman C."/>
            <person name="Dodson R.J."/>
            <person name="Gwinn M.L."/>
            <person name="Nelson W.C."/>
            <person name="DeBoy R.T."/>
            <person name="Kolonay J.F."/>
            <person name="McClarty G."/>
            <person name="Salzberg S.L."/>
            <person name="Eisen J.A."/>
            <person name="Fraser C.M."/>
        </authorList>
    </citation>
    <scope>NUCLEOTIDE SEQUENCE [LARGE SCALE GENOMIC DNA]</scope>
    <source>
        <strain>MoPn / Nigg</strain>
    </source>
</reference>
<accession>Q9PKH2</accession>
<feature type="chain" id="PRO_0000134959" description="Flavin prenyltransferase UbiX">
    <location>
        <begin position="1"/>
        <end position="192"/>
    </location>
</feature>
<feature type="binding site" evidence="1">
    <location>
        <begin position="10"/>
        <end position="12"/>
    </location>
    <ligand>
        <name>FMN</name>
        <dbReference type="ChEBI" id="CHEBI:58210"/>
    </ligand>
</feature>
<feature type="binding site" evidence="1">
    <location>
        <position position="36"/>
    </location>
    <ligand>
        <name>FMN</name>
        <dbReference type="ChEBI" id="CHEBI:58210"/>
    </ligand>
</feature>
<feature type="binding site" evidence="1">
    <location>
        <begin position="92"/>
        <end position="95"/>
    </location>
    <ligand>
        <name>FMN</name>
        <dbReference type="ChEBI" id="CHEBI:58210"/>
    </ligand>
</feature>
<feature type="binding site" evidence="1">
    <location>
        <position position="127"/>
    </location>
    <ligand>
        <name>FMN</name>
        <dbReference type="ChEBI" id="CHEBI:58210"/>
    </ligand>
</feature>
<feature type="binding site" evidence="1">
    <location>
        <position position="157"/>
    </location>
    <ligand>
        <name>dimethylallyl phosphate</name>
        <dbReference type="ChEBI" id="CHEBI:88052"/>
    </ligand>
</feature>
<feature type="binding site" evidence="1">
    <location>
        <position position="173"/>
    </location>
    <ligand>
        <name>dimethylallyl phosphate</name>
        <dbReference type="ChEBI" id="CHEBI:88052"/>
    </ligand>
</feature>
<organism>
    <name type="scientific">Chlamydia muridarum (strain MoPn / Nigg)</name>
    <dbReference type="NCBI Taxonomy" id="243161"/>
    <lineage>
        <taxon>Bacteria</taxon>
        <taxon>Pseudomonadati</taxon>
        <taxon>Chlamydiota</taxon>
        <taxon>Chlamydiia</taxon>
        <taxon>Chlamydiales</taxon>
        <taxon>Chlamydiaceae</taxon>
        <taxon>Chlamydia/Chlamydophila group</taxon>
        <taxon>Chlamydia</taxon>
    </lineage>
</organism>